<sequence length="433" mass="45818">MTTDSDTALLFDPALALPSGPAPRRTSVGVRVGSGPGSVQVGGGAPIVVQSMTNTDTADIDSTVEQVAALARAGSELVRITVDRDPAAAAVPYIREKLDKMGCLVPLVGDFHYIGHRLLTEYPACAEALAKYRINPGNVGFREKRDRQFSTIVEIAAKYDKAVRIGANWGSLDQELLTSLMDKNAGSAAPLSVGAVTREAMVQSALLSAARAEELGLKRDRIILSAKVSSVQDLITVYRMVAARSDYALHLGLTEAGMGSKGIVASSAALGILLQEGIGDTIRVSLTPQPGGDRTLEVTVAQEILQTMGFRTFVPLVAACPGCGRTTSTVFQELARDIQTYIREEMPLWRSRYPGVESLNVAVMGCIVNGPGESKHADIGISLPGTGETPSAPVFIDGEKTTTLRGEGIAAEFKTIVQDYIERRFGGAKSAAE</sequence>
<proteinExistence type="inferred from homology"/>
<gene>
    <name evidence="1" type="primary">ispG</name>
    <name type="ordered locus">Bind_0434</name>
</gene>
<accession>B2IE63</accession>
<protein>
    <recommendedName>
        <fullName evidence="1">4-hydroxy-3-methylbut-2-en-1-yl diphosphate synthase (flavodoxin)</fullName>
        <ecNumber evidence="1">1.17.7.3</ecNumber>
    </recommendedName>
    <alternativeName>
        <fullName evidence="1">1-hydroxy-2-methyl-2-(E)-butenyl 4-diphosphate synthase</fullName>
    </alternativeName>
</protein>
<organism>
    <name type="scientific">Beijerinckia indica subsp. indica (strain ATCC 9039 / DSM 1715 / NCIMB 8712)</name>
    <dbReference type="NCBI Taxonomy" id="395963"/>
    <lineage>
        <taxon>Bacteria</taxon>
        <taxon>Pseudomonadati</taxon>
        <taxon>Pseudomonadota</taxon>
        <taxon>Alphaproteobacteria</taxon>
        <taxon>Hyphomicrobiales</taxon>
        <taxon>Beijerinckiaceae</taxon>
        <taxon>Beijerinckia</taxon>
    </lineage>
</organism>
<comment type="function">
    <text evidence="1">Converts 2C-methyl-D-erythritol 2,4-cyclodiphosphate (ME-2,4cPP) into 1-hydroxy-2-methyl-2-(E)-butenyl 4-diphosphate.</text>
</comment>
<comment type="catalytic activity">
    <reaction evidence="1">
        <text>(2E)-4-hydroxy-3-methylbut-2-enyl diphosphate + oxidized [flavodoxin] + H2O + 2 H(+) = 2-C-methyl-D-erythritol 2,4-cyclic diphosphate + reduced [flavodoxin]</text>
        <dbReference type="Rhea" id="RHEA:43604"/>
        <dbReference type="Rhea" id="RHEA-COMP:10622"/>
        <dbReference type="Rhea" id="RHEA-COMP:10623"/>
        <dbReference type="ChEBI" id="CHEBI:15377"/>
        <dbReference type="ChEBI" id="CHEBI:15378"/>
        <dbReference type="ChEBI" id="CHEBI:57618"/>
        <dbReference type="ChEBI" id="CHEBI:58210"/>
        <dbReference type="ChEBI" id="CHEBI:58483"/>
        <dbReference type="ChEBI" id="CHEBI:128753"/>
        <dbReference type="EC" id="1.17.7.3"/>
    </reaction>
</comment>
<comment type="cofactor">
    <cofactor evidence="1">
        <name>[4Fe-4S] cluster</name>
        <dbReference type="ChEBI" id="CHEBI:49883"/>
    </cofactor>
    <text evidence="1">Binds 1 [4Fe-4S] cluster.</text>
</comment>
<comment type="pathway">
    <text evidence="1">Isoprenoid biosynthesis; isopentenyl diphosphate biosynthesis via DXP pathway; isopentenyl diphosphate from 1-deoxy-D-xylulose 5-phosphate: step 5/6.</text>
</comment>
<comment type="similarity">
    <text evidence="1">Belongs to the IspG family.</text>
</comment>
<keyword id="KW-0004">4Fe-4S</keyword>
<keyword id="KW-0408">Iron</keyword>
<keyword id="KW-0411">Iron-sulfur</keyword>
<keyword id="KW-0414">Isoprene biosynthesis</keyword>
<keyword id="KW-0479">Metal-binding</keyword>
<keyword id="KW-0560">Oxidoreductase</keyword>
<keyword id="KW-1185">Reference proteome</keyword>
<dbReference type="EC" id="1.17.7.3" evidence="1"/>
<dbReference type="EMBL" id="CP001016">
    <property type="protein sequence ID" value="ACB94087.1"/>
    <property type="molecule type" value="Genomic_DNA"/>
</dbReference>
<dbReference type="RefSeq" id="WP_012383445.1">
    <property type="nucleotide sequence ID" value="NC_010581.1"/>
</dbReference>
<dbReference type="SMR" id="B2IE63"/>
<dbReference type="STRING" id="395963.Bind_0434"/>
<dbReference type="KEGG" id="bid:Bind_0434"/>
<dbReference type="eggNOG" id="COG0821">
    <property type="taxonomic scope" value="Bacteria"/>
</dbReference>
<dbReference type="HOGENOM" id="CLU_042258_1_0_5"/>
<dbReference type="OrthoDB" id="9803214at2"/>
<dbReference type="UniPathway" id="UPA00056">
    <property type="reaction ID" value="UER00096"/>
</dbReference>
<dbReference type="Proteomes" id="UP000001695">
    <property type="component" value="Chromosome"/>
</dbReference>
<dbReference type="GO" id="GO:0051539">
    <property type="term" value="F:4 iron, 4 sulfur cluster binding"/>
    <property type="evidence" value="ECO:0007669"/>
    <property type="project" value="UniProtKB-UniRule"/>
</dbReference>
<dbReference type="GO" id="GO:0046429">
    <property type="term" value="F:4-hydroxy-3-methylbut-2-en-1-yl diphosphate synthase activity (ferredoxin)"/>
    <property type="evidence" value="ECO:0007669"/>
    <property type="project" value="UniProtKB-UniRule"/>
</dbReference>
<dbReference type="GO" id="GO:0141197">
    <property type="term" value="F:4-hydroxy-3-methylbut-2-enyl-diphosphate synthase activity (flavodoxin)"/>
    <property type="evidence" value="ECO:0007669"/>
    <property type="project" value="UniProtKB-EC"/>
</dbReference>
<dbReference type="GO" id="GO:0005506">
    <property type="term" value="F:iron ion binding"/>
    <property type="evidence" value="ECO:0007669"/>
    <property type="project" value="InterPro"/>
</dbReference>
<dbReference type="GO" id="GO:0019288">
    <property type="term" value="P:isopentenyl diphosphate biosynthetic process, methylerythritol 4-phosphate pathway"/>
    <property type="evidence" value="ECO:0007669"/>
    <property type="project" value="UniProtKB-UniRule"/>
</dbReference>
<dbReference type="GO" id="GO:0016114">
    <property type="term" value="P:terpenoid biosynthetic process"/>
    <property type="evidence" value="ECO:0007669"/>
    <property type="project" value="InterPro"/>
</dbReference>
<dbReference type="FunFam" id="3.30.413.10:FF:000012">
    <property type="entry name" value="4-hydroxy-3-methylbut-2-en-1-yl diphosphate synthase (flavodoxin)"/>
    <property type="match status" value="1"/>
</dbReference>
<dbReference type="Gene3D" id="3.20.20.20">
    <property type="entry name" value="Dihydropteroate synthase-like"/>
    <property type="match status" value="1"/>
</dbReference>
<dbReference type="Gene3D" id="3.30.413.10">
    <property type="entry name" value="Sulfite Reductase Hemoprotein, domain 1"/>
    <property type="match status" value="1"/>
</dbReference>
<dbReference type="HAMAP" id="MF_00159">
    <property type="entry name" value="IspG"/>
    <property type="match status" value="1"/>
</dbReference>
<dbReference type="InterPro" id="IPR011005">
    <property type="entry name" value="Dihydropteroate_synth-like_sf"/>
</dbReference>
<dbReference type="InterPro" id="IPR016425">
    <property type="entry name" value="IspG_bac"/>
</dbReference>
<dbReference type="InterPro" id="IPR004588">
    <property type="entry name" value="IspG_bac-typ"/>
</dbReference>
<dbReference type="InterPro" id="IPR045854">
    <property type="entry name" value="NO2/SO3_Rdtase_4Fe4S_sf"/>
</dbReference>
<dbReference type="NCBIfam" id="TIGR00612">
    <property type="entry name" value="ispG_gcpE"/>
    <property type="match status" value="1"/>
</dbReference>
<dbReference type="NCBIfam" id="NF001540">
    <property type="entry name" value="PRK00366.1"/>
    <property type="match status" value="1"/>
</dbReference>
<dbReference type="PANTHER" id="PTHR30454">
    <property type="entry name" value="4-HYDROXY-3-METHYLBUT-2-EN-1-YL DIPHOSPHATE SYNTHASE"/>
    <property type="match status" value="1"/>
</dbReference>
<dbReference type="PANTHER" id="PTHR30454:SF0">
    <property type="entry name" value="4-HYDROXY-3-METHYLBUT-2-EN-1-YL DIPHOSPHATE SYNTHASE (FERREDOXIN), CHLOROPLASTIC"/>
    <property type="match status" value="1"/>
</dbReference>
<dbReference type="Pfam" id="PF04551">
    <property type="entry name" value="GcpE"/>
    <property type="match status" value="1"/>
</dbReference>
<dbReference type="PIRSF" id="PIRSF004640">
    <property type="entry name" value="IspG"/>
    <property type="match status" value="1"/>
</dbReference>
<dbReference type="SUPFAM" id="SSF56014">
    <property type="entry name" value="Nitrite and sulphite reductase 4Fe-4S domain-like"/>
    <property type="match status" value="1"/>
</dbReference>
<evidence type="ECO:0000255" key="1">
    <source>
        <dbReference type="HAMAP-Rule" id="MF_00159"/>
    </source>
</evidence>
<name>ISPG_BEII9</name>
<feature type="chain" id="PRO_1000097149" description="4-hydroxy-3-methylbut-2-en-1-yl diphosphate synthase (flavodoxin)">
    <location>
        <begin position="1"/>
        <end position="433"/>
    </location>
</feature>
<feature type="binding site" evidence="1">
    <location>
        <position position="320"/>
    </location>
    <ligand>
        <name>[4Fe-4S] cluster</name>
        <dbReference type="ChEBI" id="CHEBI:49883"/>
    </ligand>
</feature>
<feature type="binding site" evidence="1">
    <location>
        <position position="323"/>
    </location>
    <ligand>
        <name>[4Fe-4S] cluster</name>
        <dbReference type="ChEBI" id="CHEBI:49883"/>
    </ligand>
</feature>
<feature type="binding site" evidence="1">
    <location>
        <position position="366"/>
    </location>
    <ligand>
        <name>[4Fe-4S] cluster</name>
        <dbReference type="ChEBI" id="CHEBI:49883"/>
    </ligand>
</feature>
<feature type="binding site" evidence="1">
    <location>
        <position position="373"/>
    </location>
    <ligand>
        <name>[4Fe-4S] cluster</name>
        <dbReference type="ChEBI" id="CHEBI:49883"/>
    </ligand>
</feature>
<reference key="1">
    <citation type="journal article" date="2010" name="J. Bacteriol.">
        <title>Complete genome sequence of Beijerinckia indica subsp. indica.</title>
        <authorList>
            <person name="Tamas I."/>
            <person name="Dedysh S.N."/>
            <person name="Liesack W."/>
            <person name="Stott M.B."/>
            <person name="Alam M."/>
            <person name="Murrell J.C."/>
            <person name="Dunfield P.F."/>
        </authorList>
    </citation>
    <scope>NUCLEOTIDE SEQUENCE [LARGE SCALE GENOMIC DNA]</scope>
    <source>
        <strain>ATCC 9039 / DSM 1715 / NCIMB 8712</strain>
    </source>
</reference>